<comment type="function">
    <text evidence="1">Specifically methylates the N4 position of cytidine in position 1402 (C1402) of 16S rRNA.</text>
</comment>
<comment type="catalytic activity">
    <reaction evidence="1">
        <text>cytidine(1402) in 16S rRNA + S-adenosyl-L-methionine = N(4)-methylcytidine(1402) in 16S rRNA + S-adenosyl-L-homocysteine + H(+)</text>
        <dbReference type="Rhea" id="RHEA:42928"/>
        <dbReference type="Rhea" id="RHEA-COMP:10286"/>
        <dbReference type="Rhea" id="RHEA-COMP:10287"/>
        <dbReference type="ChEBI" id="CHEBI:15378"/>
        <dbReference type="ChEBI" id="CHEBI:57856"/>
        <dbReference type="ChEBI" id="CHEBI:59789"/>
        <dbReference type="ChEBI" id="CHEBI:74506"/>
        <dbReference type="ChEBI" id="CHEBI:82748"/>
        <dbReference type="EC" id="2.1.1.199"/>
    </reaction>
</comment>
<comment type="subcellular location">
    <subcellularLocation>
        <location evidence="1">Cytoplasm</location>
    </subcellularLocation>
</comment>
<comment type="similarity">
    <text evidence="1">Belongs to the methyltransferase superfamily. RsmH family.</text>
</comment>
<organism>
    <name type="scientific">Francisella tularensis subsp. holarctica (strain OSU18)</name>
    <dbReference type="NCBI Taxonomy" id="393011"/>
    <lineage>
        <taxon>Bacteria</taxon>
        <taxon>Pseudomonadati</taxon>
        <taxon>Pseudomonadota</taxon>
        <taxon>Gammaproteobacteria</taxon>
        <taxon>Thiotrichales</taxon>
        <taxon>Francisellaceae</taxon>
        <taxon>Francisella</taxon>
    </lineage>
</organism>
<protein>
    <recommendedName>
        <fullName evidence="1">Ribosomal RNA small subunit methyltransferase H</fullName>
        <ecNumber evidence="1">2.1.1.199</ecNumber>
    </recommendedName>
    <alternativeName>
        <fullName evidence="1">16S rRNA m(4)C1402 methyltransferase</fullName>
    </alternativeName>
    <alternativeName>
        <fullName evidence="1">rRNA (cytosine-N(4)-)-methyltransferase RsmH</fullName>
    </alternativeName>
</protein>
<keyword id="KW-0963">Cytoplasm</keyword>
<keyword id="KW-0489">Methyltransferase</keyword>
<keyword id="KW-0698">rRNA processing</keyword>
<keyword id="KW-0949">S-adenosyl-L-methionine</keyword>
<keyword id="KW-0808">Transferase</keyword>
<name>RSMH_FRATO</name>
<accession>Q0BKT7</accession>
<evidence type="ECO:0000255" key="1">
    <source>
        <dbReference type="HAMAP-Rule" id="MF_01007"/>
    </source>
</evidence>
<proteinExistence type="inferred from homology"/>
<gene>
    <name evidence="1" type="primary">rsmH</name>
    <name type="synonym">mraW</name>
    <name type="ordered locus">FTH_1491</name>
</gene>
<reference key="1">
    <citation type="journal article" date="2006" name="J. Bacteriol.">
        <title>Chromosome rearrangement and diversification of Francisella tularensis revealed by the type B (OSU18) genome sequence.</title>
        <authorList>
            <person name="Petrosino J.F."/>
            <person name="Xiang Q."/>
            <person name="Karpathy S.E."/>
            <person name="Jiang H."/>
            <person name="Yerrapragada S."/>
            <person name="Liu Y."/>
            <person name="Gioia J."/>
            <person name="Hemphill L."/>
            <person name="Gonzalez A."/>
            <person name="Raghavan T.M."/>
            <person name="Uzman A."/>
            <person name="Fox G.E."/>
            <person name="Highlander S."/>
            <person name="Reichard M."/>
            <person name="Morton R.J."/>
            <person name="Clinkenbeard K.D."/>
            <person name="Weinstock G.M."/>
        </authorList>
    </citation>
    <scope>NUCLEOTIDE SEQUENCE [LARGE SCALE GENOMIC DNA]</scope>
    <source>
        <strain>OSU18</strain>
    </source>
</reference>
<feature type="chain" id="PRO_0000386898" description="Ribosomal RNA small subunit methyltransferase H">
    <location>
        <begin position="1"/>
        <end position="305"/>
    </location>
</feature>
<feature type="binding site" evidence="1">
    <location>
        <begin position="30"/>
        <end position="32"/>
    </location>
    <ligand>
        <name>S-adenosyl-L-methionine</name>
        <dbReference type="ChEBI" id="CHEBI:59789"/>
    </ligand>
</feature>
<feature type="binding site" evidence="1">
    <location>
        <position position="49"/>
    </location>
    <ligand>
        <name>S-adenosyl-L-methionine</name>
        <dbReference type="ChEBI" id="CHEBI:59789"/>
    </ligand>
</feature>
<feature type="binding site" evidence="1">
    <location>
        <position position="74"/>
    </location>
    <ligand>
        <name>S-adenosyl-L-methionine</name>
        <dbReference type="ChEBI" id="CHEBI:59789"/>
    </ligand>
</feature>
<feature type="binding site" evidence="1">
    <location>
        <position position="96"/>
    </location>
    <ligand>
        <name>S-adenosyl-L-methionine</name>
        <dbReference type="ChEBI" id="CHEBI:59789"/>
    </ligand>
</feature>
<feature type="binding site" evidence="1">
    <location>
        <position position="103"/>
    </location>
    <ligand>
        <name>S-adenosyl-L-methionine</name>
        <dbReference type="ChEBI" id="CHEBI:59789"/>
    </ligand>
</feature>
<sequence length="305" mass="34486">MHYSVLLQESINDLNINPQGIYIDATFGRGGHSKAILNRLTTGRLIAFDKDLDAISYARENFQFSNFEIVHASFASIYDYCLQHSLLGKIDGIIMDLGVSSPQLDNAARGFSFTHNGPLDMRMDVSKGITASQALEELSVYDLSYIFKVYGEERFAKKIALRIKDYIQQNGSIRTTLELAELIRATIGKKEKKNPATRCFQALRIYVNNELKDLEALLENILAVIKSGGRIAAISFHSLEDRIVKQKFSALINPKQELNRITKMLPQDSSQIKLKWITKKSKANEDELNQNVRSRSAILRVVEKL</sequence>
<dbReference type="EC" id="2.1.1.199" evidence="1"/>
<dbReference type="EMBL" id="CP000437">
    <property type="protein sequence ID" value="ABI83297.1"/>
    <property type="molecule type" value="Genomic_DNA"/>
</dbReference>
<dbReference type="RefSeq" id="WP_003016893.1">
    <property type="nucleotide sequence ID" value="NC_017463.1"/>
</dbReference>
<dbReference type="SMR" id="Q0BKT7"/>
<dbReference type="KEGG" id="fth:FTH_1491"/>
<dbReference type="GO" id="GO:0005737">
    <property type="term" value="C:cytoplasm"/>
    <property type="evidence" value="ECO:0007669"/>
    <property type="project" value="UniProtKB-SubCell"/>
</dbReference>
<dbReference type="GO" id="GO:0071424">
    <property type="term" value="F:rRNA (cytosine-N4-)-methyltransferase activity"/>
    <property type="evidence" value="ECO:0007669"/>
    <property type="project" value="UniProtKB-UniRule"/>
</dbReference>
<dbReference type="GO" id="GO:0070475">
    <property type="term" value="P:rRNA base methylation"/>
    <property type="evidence" value="ECO:0007669"/>
    <property type="project" value="UniProtKB-UniRule"/>
</dbReference>
<dbReference type="Gene3D" id="1.10.150.170">
    <property type="entry name" value="Putative methyltransferase TM0872, insert domain"/>
    <property type="match status" value="1"/>
</dbReference>
<dbReference type="Gene3D" id="3.40.50.150">
    <property type="entry name" value="Vaccinia Virus protein VP39"/>
    <property type="match status" value="1"/>
</dbReference>
<dbReference type="HAMAP" id="MF_01007">
    <property type="entry name" value="16SrRNA_methyltr_H"/>
    <property type="match status" value="1"/>
</dbReference>
<dbReference type="InterPro" id="IPR002903">
    <property type="entry name" value="RsmH"/>
</dbReference>
<dbReference type="InterPro" id="IPR023397">
    <property type="entry name" value="SAM-dep_MeTrfase_MraW_recog"/>
</dbReference>
<dbReference type="InterPro" id="IPR029063">
    <property type="entry name" value="SAM-dependent_MTases_sf"/>
</dbReference>
<dbReference type="NCBIfam" id="TIGR00006">
    <property type="entry name" value="16S rRNA (cytosine(1402)-N(4))-methyltransferase RsmH"/>
    <property type="match status" value="1"/>
</dbReference>
<dbReference type="PANTHER" id="PTHR11265:SF0">
    <property type="entry name" value="12S RRNA N4-METHYLCYTIDINE METHYLTRANSFERASE"/>
    <property type="match status" value="1"/>
</dbReference>
<dbReference type="PANTHER" id="PTHR11265">
    <property type="entry name" value="S-ADENOSYL-METHYLTRANSFERASE MRAW"/>
    <property type="match status" value="1"/>
</dbReference>
<dbReference type="Pfam" id="PF01795">
    <property type="entry name" value="Methyltransf_5"/>
    <property type="match status" value="1"/>
</dbReference>
<dbReference type="PIRSF" id="PIRSF004486">
    <property type="entry name" value="MraW"/>
    <property type="match status" value="1"/>
</dbReference>
<dbReference type="SUPFAM" id="SSF81799">
    <property type="entry name" value="Putative methyltransferase TM0872, insert domain"/>
    <property type="match status" value="1"/>
</dbReference>
<dbReference type="SUPFAM" id="SSF53335">
    <property type="entry name" value="S-adenosyl-L-methionine-dependent methyltransferases"/>
    <property type="match status" value="1"/>
</dbReference>